<gene>
    <name evidence="2" type="primary">rapA</name>
    <name type="synonym">hepA</name>
    <name type="ordered locus">STY0111</name>
    <name type="ordered locus">t0099</name>
</gene>
<protein>
    <recommendedName>
        <fullName evidence="2">RNA polymerase-associated protein RapA</fullName>
        <ecNumber evidence="2">3.6.4.-</ecNumber>
    </recommendedName>
    <alternativeName>
        <fullName evidence="2">ATP-dependent helicase HepA</fullName>
    </alternativeName>
</protein>
<reference key="1">
    <citation type="journal article" date="2001" name="Nature">
        <title>Complete genome sequence of a multiple drug resistant Salmonella enterica serovar Typhi CT18.</title>
        <authorList>
            <person name="Parkhill J."/>
            <person name="Dougan G."/>
            <person name="James K.D."/>
            <person name="Thomson N.R."/>
            <person name="Pickard D."/>
            <person name="Wain J."/>
            <person name="Churcher C.M."/>
            <person name="Mungall K.L."/>
            <person name="Bentley S.D."/>
            <person name="Holden M.T.G."/>
            <person name="Sebaihia M."/>
            <person name="Baker S."/>
            <person name="Basham D."/>
            <person name="Brooks K."/>
            <person name="Chillingworth T."/>
            <person name="Connerton P."/>
            <person name="Cronin A."/>
            <person name="Davis P."/>
            <person name="Davies R.M."/>
            <person name="Dowd L."/>
            <person name="White N."/>
            <person name="Farrar J."/>
            <person name="Feltwell T."/>
            <person name="Hamlin N."/>
            <person name="Haque A."/>
            <person name="Hien T.T."/>
            <person name="Holroyd S."/>
            <person name="Jagels K."/>
            <person name="Krogh A."/>
            <person name="Larsen T.S."/>
            <person name="Leather S."/>
            <person name="Moule S."/>
            <person name="O'Gaora P."/>
            <person name="Parry C."/>
            <person name="Quail M.A."/>
            <person name="Rutherford K.M."/>
            <person name="Simmonds M."/>
            <person name="Skelton J."/>
            <person name="Stevens K."/>
            <person name="Whitehead S."/>
            <person name="Barrell B.G."/>
        </authorList>
    </citation>
    <scope>NUCLEOTIDE SEQUENCE [LARGE SCALE GENOMIC DNA]</scope>
    <source>
        <strain>CT18</strain>
    </source>
</reference>
<reference key="2">
    <citation type="journal article" date="2003" name="J. Bacteriol.">
        <title>Comparative genomics of Salmonella enterica serovar Typhi strains Ty2 and CT18.</title>
        <authorList>
            <person name="Deng W."/>
            <person name="Liou S.-R."/>
            <person name="Plunkett G. III"/>
            <person name="Mayhew G.F."/>
            <person name="Rose D.J."/>
            <person name="Burland V."/>
            <person name="Kodoyianni V."/>
            <person name="Schwartz D.C."/>
            <person name="Blattner F.R."/>
        </authorList>
    </citation>
    <scope>NUCLEOTIDE SEQUENCE [LARGE SCALE GENOMIC DNA]</scope>
    <source>
        <strain>ATCC 700931 / Ty2</strain>
    </source>
</reference>
<dbReference type="EC" id="3.6.4.-" evidence="2"/>
<dbReference type="EMBL" id="AL513382">
    <property type="protein sequence ID" value="CAD01252.1"/>
    <property type="molecule type" value="Genomic_DNA"/>
</dbReference>
<dbReference type="EMBL" id="AE014613">
    <property type="protein sequence ID" value="AAO67832.1"/>
    <property type="molecule type" value="Genomic_DNA"/>
</dbReference>
<dbReference type="RefSeq" id="NP_454708.1">
    <property type="nucleotide sequence ID" value="NC_003198.1"/>
</dbReference>
<dbReference type="RefSeq" id="WP_001116972.1">
    <property type="nucleotide sequence ID" value="NZ_WSUR01000028.1"/>
</dbReference>
<dbReference type="SMR" id="Q8Z9J4"/>
<dbReference type="STRING" id="220341.gene:17584154"/>
<dbReference type="KEGG" id="stt:t0099"/>
<dbReference type="KEGG" id="sty:STY0111"/>
<dbReference type="PATRIC" id="fig|220341.7.peg.111"/>
<dbReference type="eggNOG" id="COG0553">
    <property type="taxonomic scope" value="Bacteria"/>
</dbReference>
<dbReference type="HOGENOM" id="CLU_011520_0_0_6"/>
<dbReference type="OMA" id="MSILERD"/>
<dbReference type="OrthoDB" id="9814088at2"/>
<dbReference type="Proteomes" id="UP000000541">
    <property type="component" value="Chromosome"/>
</dbReference>
<dbReference type="Proteomes" id="UP000002670">
    <property type="component" value="Chromosome"/>
</dbReference>
<dbReference type="GO" id="GO:0005524">
    <property type="term" value="F:ATP binding"/>
    <property type="evidence" value="ECO:0007669"/>
    <property type="project" value="UniProtKB-UniRule"/>
</dbReference>
<dbReference type="GO" id="GO:0003677">
    <property type="term" value="F:DNA binding"/>
    <property type="evidence" value="ECO:0007669"/>
    <property type="project" value="UniProtKB-KW"/>
</dbReference>
<dbReference type="GO" id="GO:0004386">
    <property type="term" value="F:helicase activity"/>
    <property type="evidence" value="ECO:0007669"/>
    <property type="project" value="UniProtKB-UniRule"/>
</dbReference>
<dbReference type="GO" id="GO:0016817">
    <property type="term" value="F:hydrolase activity, acting on acid anhydrides"/>
    <property type="evidence" value="ECO:0007669"/>
    <property type="project" value="InterPro"/>
</dbReference>
<dbReference type="GO" id="GO:0006355">
    <property type="term" value="P:regulation of DNA-templated transcription"/>
    <property type="evidence" value="ECO:0007669"/>
    <property type="project" value="UniProtKB-UniRule"/>
</dbReference>
<dbReference type="CDD" id="cd18011">
    <property type="entry name" value="DEXDc_RapA"/>
    <property type="match status" value="1"/>
</dbReference>
<dbReference type="CDD" id="cd18793">
    <property type="entry name" value="SF2_C_SNF"/>
    <property type="match status" value="1"/>
</dbReference>
<dbReference type="FunFam" id="2.30.30.140:FF:000020">
    <property type="entry name" value="RNA polymerase-associated protein RapA"/>
    <property type="match status" value="1"/>
</dbReference>
<dbReference type="FunFam" id="3.30.360.80:FF:000001">
    <property type="entry name" value="RNA polymerase-associated protein RapA"/>
    <property type="match status" value="1"/>
</dbReference>
<dbReference type="FunFam" id="3.40.50.10810:FF:000012">
    <property type="entry name" value="RNA polymerase-associated protein RapA"/>
    <property type="match status" value="1"/>
</dbReference>
<dbReference type="FunFam" id="3.40.50.300:FF:000350">
    <property type="entry name" value="RNA polymerase-associated protein RapA"/>
    <property type="match status" value="1"/>
</dbReference>
<dbReference type="Gene3D" id="2.30.30.140">
    <property type="match status" value="1"/>
</dbReference>
<dbReference type="Gene3D" id="2.30.30.930">
    <property type="match status" value="1"/>
</dbReference>
<dbReference type="Gene3D" id="3.30.360.80">
    <property type="match status" value="1"/>
</dbReference>
<dbReference type="Gene3D" id="6.10.140.1500">
    <property type="match status" value="1"/>
</dbReference>
<dbReference type="Gene3D" id="6.10.140.2230">
    <property type="match status" value="1"/>
</dbReference>
<dbReference type="Gene3D" id="3.40.50.300">
    <property type="entry name" value="P-loop containing nucleotide triphosphate hydrolases"/>
    <property type="match status" value="1"/>
</dbReference>
<dbReference type="Gene3D" id="3.40.50.10810">
    <property type="entry name" value="Tandem AAA-ATPase domain"/>
    <property type="match status" value="1"/>
</dbReference>
<dbReference type="HAMAP" id="MF_01821">
    <property type="entry name" value="Helicase_RapA"/>
    <property type="match status" value="1"/>
</dbReference>
<dbReference type="InterPro" id="IPR014001">
    <property type="entry name" value="Helicase_ATP-bd"/>
</dbReference>
<dbReference type="InterPro" id="IPR001650">
    <property type="entry name" value="Helicase_C-like"/>
</dbReference>
<dbReference type="InterPro" id="IPR023949">
    <property type="entry name" value="Helicase_RapA"/>
</dbReference>
<dbReference type="InterPro" id="IPR027417">
    <property type="entry name" value="P-loop_NTPase"/>
</dbReference>
<dbReference type="InterPro" id="IPR022737">
    <property type="entry name" value="RapA_C"/>
</dbReference>
<dbReference type="InterPro" id="IPR038718">
    <property type="entry name" value="SNF2-like_sf"/>
</dbReference>
<dbReference type="InterPro" id="IPR049730">
    <property type="entry name" value="SNF2/RAD54-like_C"/>
</dbReference>
<dbReference type="InterPro" id="IPR000330">
    <property type="entry name" value="SNF2_N"/>
</dbReference>
<dbReference type="InterPro" id="IPR040765">
    <property type="entry name" value="Tudor_1_RapA"/>
</dbReference>
<dbReference type="InterPro" id="IPR040766">
    <property type="entry name" value="Tudor_2_RapA"/>
</dbReference>
<dbReference type="NCBIfam" id="NF003426">
    <property type="entry name" value="PRK04914.1"/>
    <property type="match status" value="1"/>
</dbReference>
<dbReference type="PANTHER" id="PTHR45766">
    <property type="entry name" value="DNA ANNEALING HELICASE AND ENDONUCLEASE ZRANB3 FAMILY MEMBER"/>
    <property type="match status" value="1"/>
</dbReference>
<dbReference type="PANTHER" id="PTHR45766:SF6">
    <property type="entry name" value="SWI_SNF-RELATED MATRIX-ASSOCIATED ACTIN-DEPENDENT REGULATOR OF CHROMATIN SUBFAMILY A-LIKE PROTEIN 1"/>
    <property type="match status" value="1"/>
</dbReference>
<dbReference type="Pfam" id="PF00271">
    <property type="entry name" value="Helicase_C"/>
    <property type="match status" value="1"/>
</dbReference>
<dbReference type="Pfam" id="PF12137">
    <property type="entry name" value="RapA_C"/>
    <property type="match status" value="1"/>
</dbReference>
<dbReference type="Pfam" id="PF00176">
    <property type="entry name" value="SNF2-rel_dom"/>
    <property type="match status" value="1"/>
</dbReference>
<dbReference type="Pfam" id="PF18339">
    <property type="entry name" value="Tudor_1_RapA"/>
    <property type="match status" value="1"/>
</dbReference>
<dbReference type="Pfam" id="PF18337">
    <property type="entry name" value="Tudor_RapA"/>
    <property type="match status" value="1"/>
</dbReference>
<dbReference type="SMART" id="SM00487">
    <property type="entry name" value="DEXDc"/>
    <property type="match status" value="1"/>
</dbReference>
<dbReference type="SMART" id="SM00490">
    <property type="entry name" value="HELICc"/>
    <property type="match status" value="1"/>
</dbReference>
<dbReference type="SUPFAM" id="SSF52540">
    <property type="entry name" value="P-loop containing nucleoside triphosphate hydrolases"/>
    <property type="match status" value="2"/>
</dbReference>
<dbReference type="PROSITE" id="PS51192">
    <property type="entry name" value="HELICASE_ATP_BIND_1"/>
    <property type="match status" value="1"/>
</dbReference>
<dbReference type="PROSITE" id="PS51194">
    <property type="entry name" value="HELICASE_CTER"/>
    <property type="match status" value="1"/>
</dbReference>
<feature type="initiator methionine" description="Removed" evidence="1">
    <location>
        <position position="1"/>
    </location>
</feature>
<feature type="chain" id="PRO_0000207184" description="RNA polymerase-associated protein RapA">
    <location>
        <begin position="2"/>
        <end position="968"/>
    </location>
</feature>
<feature type="domain" description="Helicase ATP-binding" evidence="2">
    <location>
        <begin position="164"/>
        <end position="334"/>
    </location>
</feature>
<feature type="domain" description="Helicase C-terminal" evidence="2">
    <location>
        <begin position="490"/>
        <end position="685"/>
    </location>
</feature>
<feature type="short sequence motif" description="DEAH box">
    <location>
        <begin position="280"/>
        <end position="283"/>
    </location>
</feature>
<feature type="binding site" evidence="2">
    <location>
        <begin position="177"/>
        <end position="184"/>
    </location>
    <ligand>
        <name>ATP</name>
        <dbReference type="ChEBI" id="CHEBI:30616"/>
    </ligand>
</feature>
<proteinExistence type="inferred from homology"/>
<organism>
    <name type="scientific">Salmonella typhi</name>
    <dbReference type="NCBI Taxonomy" id="90370"/>
    <lineage>
        <taxon>Bacteria</taxon>
        <taxon>Pseudomonadati</taxon>
        <taxon>Pseudomonadota</taxon>
        <taxon>Gammaproteobacteria</taxon>
        <taxon>Enterobacterales</taxon>
        <taxon>Enterobacteriaceae</taxon>
        <taxon>Salmonella</taxon>
    </lineage>
</organism>
<evidence type="ECO:0000250" key="1"/>
<evidence type="ECO:0000255" key="2">
    <source>
        <dbReference type="HAMAP-Rule" id="MF_01821"/>
    </source>
</evidence>
<comment type="function">
    <text evidence="2">Transcription regulator that activates transcription by stimulating RNA polymerase (RNAP) recycling in case of stress conditions such as supercoiled DNA or high salt concentrations. Probably acts by releasing the RNAP, when it is trapped or immobilized on tightly supercoiled DNA. Does not activate transcription on linear DNA. Probably not involved in DNA repair.</text>
</comment>
<comment type="subunit">
    <text evidence="2">Interacts with the RNAP. Has a higher affinity for the core RNAP than for the holoenzyme. Its ATPase activity is stimulated by binding to RNAP.</text>
</comment>
<comment type="similarity">
    <text evidence="2">Belongs to the SNF2/RAD54 helicase family. RapA subfamily.</text>
</comment>
<name>RAPA_SALTI</name>
<keyword id="KW-0010">Activator</keyword>
<keyword id="KW-0067">ATP-binding</keyword>
<keyword id="KW-0238">DNA-binding</keyword>
<keyword id="KW-0347">Helicase</keyword>
<keyword id="KW-0378">Hydrolase</keyword>
<keyword id="KW-0547">Nucleotide-binding</keyword>
<keyword id="KW-0804">Transcription</keyword>
<keyword id="KW-0805">Transcription regulation</keyword>
<accession>Q8Z9J4</accession>
<sequence>MPFTLGQRWISDTESELGLGTVVAMDARTVTLLFPSTGENRLYARSDSPVTRVMFNPGDTITSHEGWQLHIDEVKEENGLLVYVGTRLDTEETNVTLREVLLDSKLVFSKPQDRLFAGQIDRMDRFALRYRARKFQSEQYRMPYSGLRGQRTNLIPHQLNIAHDVGRRHAPRVLLADEVGLGKTIEAGMILHQQLLSGAAERVLIIVPETLQHQWLVEMLRRFNLRFALFDDERYTEAQHDAYNPFETEQLVICSLDFARRNKQRLEHLCDAEWDLLVVDEAHHLVWSTDAPSREYMAIEQLAERVPGVLLLTATPEQLGMESHFARLRLLDPNRFHDFEQFVEEQKNYRPVADAVAMLLAGNKLSNDELNRLGDLIGEQDIEPLLQAANSDRDDAQAARDELVSMLMDRHGTSRVLFRNTRNGVKGFPKRELHTVKLPLPTQYQTAIKVSGIMGARKSAEDRARDMLYPEQIYQEFEGDTGTWWNFDPRVEWLMGYLTSHRSQKVLVICAKATTALQLEQVLREREGIRAAVFHEGMSIIERDRAAAWFAEEDTGAQVLLCSEIGSEGRNFQFASNLVMFDLPFNPDLLEQRIGRLDRIGQAHDIQIHVPYLEKTAQSVLVRWYHEGLDAFEHTCPTGRAIYDSAYASLINYLAAPEETDGFDDLIKSCREQHEALKAQLEQGRDRLLEINSNGGEKAQQLAQSIEEQDDDTNLIAFAMNLFDIVGINQDDRGDNLIVLTPSDHMLVPDFPGLPEDGCTITFERDVALSREDAQFITWEHPLIRNGLDLILSGDTGSSTISLLKNKALPVGTLLVELVYVVEAQAPKQLQLNRFLPPTPVRMLLDKNGNNLAAQVEFETFNRQLSAVNRHTGSKLVNAVQQDVHAILQLGETQIEQSARALIDNARREADEKLSGELSRLEALRAVNPNIRDDELAAIDSNRQQVLESLNQAGWRLDALRLIVVTHQ</sequence>